<accession>Q62LZ0</accession>
<sequence>MSITRRTTLSKYLIEQQRETHNLPADLRLLIEVVARACKAISYNVSKGALGDALGTAGSENVQGEVQKKLDILSNEILLDANEWGGNLAAMASEEMETFFPIPANYPRGEYLLVFDPLDGSSNIDVNVSIGTIFSVLRCPDGQQATEQSFLQPGTEQVAAGYAVYGPQTVFVLTTGNGVNCFTLDREVGSWVLTQSNLRIPEDTREYAINASNARHWYEPVKRYIDELNAGAEGPRGENFNMRWIASMVADVHRILNRGGIFMYPADKRTPDRPGKLRLMYEANPMSFIVEQAGGAATTGLKRILDVQPTGLHQRVPVILGSKNEVERVARYHEQAQS</sequence>
<organism>
    <name type="scientific">Burkholderia mallei (strain ATCC 23344)</name>
    <dbReference type="NCBI Taxonomy" id="243160"/>
    <lineage>
        <taxon>Bacteria</taxon>
        <taxon>Pseudomonadati</taxon>
        <taxon>Pseudomonadota</taxon>
        <taxon>Betaproteobacteria</taxon>
        <taxon>Burkholderiales</taxon>
        <taxon>Burkholderiaceae</taxon>
        <taxon>Burkholderia</taxon>
        <taxon>pseudomallei group</taxon>
    </lineage>
</organism>
<comment type="catalytic activity">
    <reaction evidence="1">
        <text>beta-D-fructose 1,6-bisphosphate + H2O = beta-D-fructose 6-phosphate + phosphate</text>
        <dbReference type="Rhea" id="RHEA:11064"/>
        <dbReference type="ChEBI" id="CHEBI:15377"/>
        <dbReference type="ChEBI" id="CHEBI:32966"/>
        <dbReference type="ChEBI" id="CHEBI:43474"/>
        <dbReference type="ChEBI" id="CHEBI:57634"/>
        <dbReference type="EC" id="3.1.3.11"/>
    </reaction>
</comment>
<comment type="cofactor">
    <cofactor evidence="1">
        <name>Mg(2+)</name>
        <dbReference type="ChEBI" id="CHEBI:18420"/>
    </cofactor>
    <text evidence="1">Binds 2 magnesium ions per subunit.</text>
</comment>
<comment type="pathway">
    <text evidence="1">Carbohydrate biosynthesis; gluconeogenesis.</text>
</comment>
<comment type="subunit">
    <text evidence="1">Homotetramer.</text>
</comment>
<comment type="subcellular location">
    <subcellularLocation>
        <location evidence="1">Cytoplasm</location>
    </subcellularLocation>
</comment>
<comment type="similarity">
    <text evidence="1">Belongs to the FBPase class 1 family.</text>
</comment>
<name>F16PA_BURMA</name>
<keyword id="KW-0119">Carbohydrate metabolism</keyword>
<keyword id="KW-0963">Cytoplasm</keyword>
<keyword id="KW-0378">Hydrolase</keyword>
<keyword id="KW-0460">Magnesium</keyword>
<keyword id="KW-0479">Metal-binding</keyword>
<keyword id="KW-1185">Reference proteome</keyword>
<reference key="1">
    <citation type="journal article" date="2004" name="Proc. Natl. Acad. Sci. U.S.A.">
        <title>Structural flexibility in the Burkholderia mallei genome.</title>
        <authorList>
            <person name="Nierman W.C."/>
            <person name="DeShazer D."/>
            <person name="Kim H.S."/>
            <person name="Tettelin H."/>
            <person name="Nelson K.E."/>
            <person name="Feldblyum T.V."/>
            <person name="Ulrich R.L."/>
            <person name="Ronning C.M."/>
            <person name="Brinkac L.M."/>
            <person name="Daugherty S.C."/>
            <person name="Davidsen T.D."/>
            <person name="DeBoy R.T."/>
            <person name="Dimitrov G."/>
            <person name="Dodson R.J."/>
            <person name="Durkin A.S."/>
            <person name="Gwinn M.L."/>
            <person name="Haft D.H."/>
            <person name="Khouri H.M."/>
            <person name="Kolonay J.F."/>
            <person name="Madupu R."/>
            <person name="Mohammoud Y."/>
            <person name="Nelson W.C."/>
            <person name="Radune D."/>
            <person name="Romero C.M."/>
            <person name="Sarria S."/>
            <person name="Selengut J."/>
            <person name="Shamblin C."/>
            <person name="Sullivan S.A."/>
            <person name="White O."/>
            <person name="Yu Y."/>
            <person name="Zafar N."/>
            <person name="Zhou L."/>
            <person name="Fraser C.M."/>
        </authorList>
    </citation>
    <scope>NUCLEOTIDE SEQUENCE [LARGE SCALE GENOMIC DNA]</scope>
    <source>
        <strain>ATCC 23344</strain>
    </source>
</reference>
<feature type="chain" id="PRO_0000364490" description="Fructose-1,6-bisphosphatase class 1">
    <location>
        <begin position="1"/>
        <end position="338"/>
    </location>
</feature>
<feature type="binding site" evidence="1">
    <location>
        <position position="94"/>
    </location>
    <ligand>
        <name>Mg(2+)</name>
        <dbReference type="ChEBI" id="CHEBI:18420"/>
        <label>1</label>
    </ligand>
</feature>
<feature type="binding site" evidence="1">
    <location>
        <position position="116"/>
    </location>
    <ligand>
        <name>Mg(2+)</name>
        <dbReference type="ChEBI" id="CHEBI:18420"/>
        <label>1</label>
    </ligand>
</feature>
<feature type="binding site" evidence="1">
    <location>
        <position position="116"/>
    </location>
    <ligand>
        <name>Mg(2+)</name>
        <dbReference type="ChEBI" id="CHEBI:18420"/>
        <label>2</label>
    </ligand>
</feature>
<feature type="binding site" evidence="1">
    <location>
        <position position="118"/>
    </location>
    <ligand>
        <name>Mg(2+)</name>
        <dbReference type="ChEBI" id="CHEBI:18420"/>
        <label>1</label>
    </ligand>
</feature>
<feature type="binding site" evidence="1">
    <location>
        <begin position="119"/>
        <end position="122"/>
    </location>
    <ligand>
        <name>substrate</name>
    </ligand>
</feature>
<feature type="binding site" evidence="1">
    <location>
        <position position="119"/>
    </location>
    <ligand>
        <name>Mg(2+)</name>
        <dbReference type="ChEBI" id="CHEBI:18420"/>
        <label>2</label>
    </ligand>
</feature>
<feature type="binding site" evidence="1">
    <location>
        <position position="210"/>
    </location>
    <ligand>
        <name>substrate</name>
    </ligand>
</feature>
<feature type="binding site" evidence="1">
    <location>
        <position position="276"/>
    </location>
    <ligand>
        <name>substrate</name>
    </ligand>
</feature>
<feature type="binding site" evidence="1">
    <location>
        <position position="282"/>
    </location>
    <ligand>
        <name>Mg(2+)</name>
        <dbReference type="ChEBI" id="CHEBI:18420"/>
        <label>2</label>
    </ligand>
</feature>
<dbReference type="EC" id="3.1.3.11" evidence="1"/>
<dbReference type="EMBL" id="CP000010">
    <property type="protein sequence ID" value="AAU49223.1"/>
    <property type="molecule type" value="Genomic_DNA"/>
</dbReference>
<dbReference type="RefSeq" id="WP_004189384.1">
    <property type="nucleotide sequence ID" value="NC_006348.1"/>
</dbReference>
<dbReference type="RefSeq" id="YP_102278.1">
    <property type="nucleotide sequence ID" value="NC_006348.1"/>
</dbReference>
<dbReference type="SMR" id="Q62LZ0"/>
<dbReference type="KEGG" id="bma:BMA0469"/>
<dbReference type="PATRIC" id="fig|243160.12.peg.479"/>
<dbReference type="eggNOG" id="COG0158">
    <property type="taxonomic scope" value="Bacteria"/>
</dbReference>
<dbReference type="HOGENOM" id="CLU_039977_0_0_4"/>
<dbReference type="UniPathway" id="UPA00138"/>
<dbReference type="Proteomes" id="UP000006693">
    <property type="component" value="Chromosome 1"/>
</dbReference>
<dbReference type="GO" id="GO:0005829">
    <property type="term" value="C:cytosol"/>
    <property type="evidence" value="ECO:0007669"/>
    <property type="project" value="TreeGrafter"/>
</dbReference>
<dbReference type="GO" id="GO:0042132">
    <property type="term" value="F:fructose 1,6-bisphosphate 1-phosphatase activity"/>
    <property type="evidence" value="ECO:0007669"/>
    <property type="project" value="UniProtKB-UniRule"/>
</dbReference>
<dbReference type="GO" id="GO:0000287">
    <property type="term" value="F:magnesium ion binding"/>
    <property type="evidence" value="ECO:0007669"/>
    <property type="project" value="UniProtKB-UniRule"/>
</dbReference>
<dbReference type="GO" id="GO:0030388">
    <property type="term" value="P:fructose 1,6-bisphosphate metabolic process"/>
    <property type="evidence" value="ECO:0007669"/>
    <property type="project" value="TreeGrafter"/>
</dbReference>
<dbReference type="GO" id="GO:0006002">
    <property type="term" value="P:fructose 6-phosphate metabolic process"/>
    <property type="evidence" value="ECO:0007669"/>
    <property type="project" value="TreeGrafter"/>
</dbReference>
<dbReference type="GO" id="GO:0006000">
    <property type="term" value="P:fructose metabolic process"/>
    <property type="evidence" value="ECO:0007669"/>
    <property type="project" value="TreeGrafter"/>
</dbReference>
<dbReference type="GO" id="GO:0006094">
    <property type="term" value="P:gluconeogenesis"/>
    <property type="evidence" value="ECO:0007669"/>
    <property type="project" value="UniProtKB-UniRule"/>
</dbReference>
<dbReference type="GO" id="GO:0005986">
    <property type="term" value="P:sucrose biosynthetic process"/>
    <property type="evidence" value="ECO:0007669"/>
    <property type="project" value="TreeGrafter"/>
</dbReference>
<dbReference type="CDD" id="cd00354">
    <property type="entry name" value="FBPase"/>
    <property type="match status" value="1"/>
</dbReference>
<dbReference type="FunFam" id="3.30.540.10:FF:000006">
    <property type="entry name" value="Fructose-1,6-bisphosphatase class 1"/>
    <property type="match status" value="1"/>
</dbReference>
<dbReference type="FunFam" id="3.40.190.80:FF:000011">
    <property type="entry name" value="Fructose-1,6-bisphosphatase class 1"/>
    <property type="match status" value="1"/>
</dbReference>
<dbReference type="Gene3D" id="3.40.190.80">
    <property type="match status" value="1"/>
</dbReference>
<dbReference type="Gene3D" id="3.30.540.10">
    <property type="entry name" value="Fructose-1,6-Bisphosphatase, subunit A, domain 1"/>
    <property type="match status" value="1"/>
</dbReference>
<dbReference type="HAMAP" id="MF_01855">
    <property type="entry name" value="FBPase_class1"/>
    <property type="match status" value="1"/>
</dbReference>
<dbReference type="InterPro" id="IPR044015">
    <property type="entry name" value="FBPase_C_dom"/>
</dbReference>
<dbReference type="InterPro" id="IPR000146">
    <property type="entry name" value="FBPase_class-1"/>
</dbReference>
<dbReference type="InterPro" id="IPR033391">
    <property type="entry name" value="FBPase_N"/>
</dbReference>
<dbReference type="InterPro" id="IPR028343">
    <property type="entry name" value="FBPtase"/>
</dbReference>
<dbReference type="NCBIfam" id="NF006778">
    <property type="entry name" value="PRK09293.1-1"/>
    <property type="match status" value="1"/>
</dbReference>
<dbReference type="NCBIfam" id="NF006779">
    <property type="entry name" value="PRK09293.1-3"/>
    <property type="match status" value="1"/>
</dbReference>
<dbReference type="NCBIfam" id="NF006780">
    <property type="entry name" value="PRK09293.1-4"/>
    <property type="match status" value="1"/>
</dbReference>
<dbReference type="PANTHER" id="PTHR11556">
    <property type="entry name" value="FRUCTOSE-1,6-BISPHOSPHATASE-RELATED"/>
    <property type="match status" value="1"/>
</dbReference>
<dbReference type="PANTHER" id="PTHR11556:SF35">
    <property type="entry name" value="SEDOHEPTULOSE-1,7-BISPHOSPHATASE, CHLOROPLASTIC"/>
    <property type="match status" value="1"/>
</dbReference>
<dbReference type="Pfam" id="PF00316">
    <property type="entry name" value="FBPase"/>
    <property type="match status" value="1"/>
</dbReference>
<dbReference type="Pfam" id="PF18913">
    <property type="entry name" value="FBPase_C"/>
    <property type="match status" value="1"/>
</dbReference>
<dbReference type="PIRSF" id="PIRSF500210">
    <property type="entry name" value="FBPtase"/>
    <property type="match status" value="1"/>
</dbReference>
<dbReference type="PIRSF" id="PIRSF000904">
    <property type="entry name" value="FBPtase_SBPase"/>
    <property type="match status" value="1"/>
</dbReference>
<dbReference type="PRINTS" id="PR00115">
    <property type="entry name" value="F16BPHPHTASE"/>
</dbReference>
<dbReference type="SUPFAM" id="SSF56655">
    <property type="entry name" value="Carbohydrate phosphatase"/>
    <property type="match status" value="1"/>
</dbReference>
<gene>
    <name evidence="1" type="primary">fbp</name>
    <name type="ordered locus">BMA0469</name>
</gene>
<protein>
    <recommendedName>
        <fullName evidence="1">Fructose-1,6-bisphosphatase class 1</fullName>
        <shortName evidence="1">FBPase class 1</shortName>
        <ecNumber evidence="1">3.1.3.11</ecNumber>
    </recommendedName>
    <alternativeName>
        <fullName evidence="1">D-fructose-1,6-bisphosphate 1-phosphohydrolase class 1</fullName>
    </alternativeName>
</protein>
<proteinExistence type="inferred from homology"/>
<evidence type="ECO:0000255" key="1">
    <source>
        <dbReference type="HAMAP-Rule" id="MF_01855"/>
    </source>
</evidence>